<evidence type="ECO:0000255" key="1">
    <source>
        <dbReference type="HAMAP-Rule" id="MF_00127"/>
    </source>
</evidence>
<gene>
    <name evidence="1" type="primary">hisS</name>
    <name type="ordered locus">Cag_1467</name>
</gene>
<keyword id="KW-0030">Aminoacyl-tRNA synthetase</keyword>
<keyword id="KW-0067">ATP-binding</keyword>
<keyword id="KW-0963">Cytoplasm</keyword>
<keyword id="KW-0436">Ligase</keyword>
<keyword id="KW-0547">Nucleotide-binding</keyword>
<keyword id="KW-0648">Protein biosynthesis</keyword>
<protein>
    <recommendedName>
        <fullName evidence="1">Histidine--tRNA ligase</fullName>
        <ecNumber evidence="1">6.1.1.21</ecNumber>
    </recommendedName>
    <alternativeName>
        <fullName evidence="1">Histidyl-tRNA synthetase</fullName>
        <shortName evidence="1">HisRS</shortName>
    </alternativeName>
</protein>
<reference key="1">
    <citation type="submission" date="2005-08" db="EMBL/GenBank/DDBJ databases">
        <title>Complete sequence of Chlorobium chlorochromatii CaD3.</title>
        <authorList>
            <consortium name="US DOE Joint Genome Institute"/>
            <person name="Copeland A."/>
            <person name="Lucas S."/>
            <person name="Lapidus A."/>
            <person name="Barry K."/>
            <person name="Detter J.C."/>
            <person name="Glavina T."/>
            <person name="Hammon N."/>
            <person name="Israni S."/>
            <person name="Pitluck S."/>
            <person name="Bryant D."/>
            <person name="Schmutz J."/>
            <person name="Larimer F."/>
            <person name="Land M."/>
            <person name="Kyrpides N."/>
            <person name="Ivanova N."/>
            <person name="Richardson P."/>
        </authorList>
    </citation>
    <scope>NUCLEOTIDE SEQUENCE [LARGE SCALE GENOMIC DNA]</scope>
    <source>
        <strain>CaD3</strain>
    </source>
</reference>
<feature type="chain" id="PRO_1000057824" description="Histidine--tRNA ligase">
    <location>
        <begin position="1"/>
        <end position="425"/>
    </location>
</feature>
<organism>
    <name type="scientific">Chlorobium chlorochromatii (strain CaD3)</name>
    <dbReference type="NCBI Taxonomy" id="340177"/>
    <lineage>
        <taxon>Bacteria</taxon>
        <taxon>Pseudomonadati</taxon>
        <taxon>Chlorobiota</taxon>
        <taxon>Chlorobiia</taxon>
        <taxon>Chlorobiales</taxon>
        <taxon>Chlorobiaceae</taxon>
        <taxon>Chlorobium/Pelodictyon group</taxon>
        <taxon>Chlorobium</taxon>
    </lineage>
</organism>
<dbReference type="EC" id="6.1.1.21" evidence="1"/>
<dbReference type="EMBL" id="CP000108">
    <property type="protein sequence ID" value="ABB28723.1"/>
    <property type="molecule type" value="Genomic_DNA"/>
</dbReference>
<dbReference type="SMR" id="Q3AQK2"/>
<dbReference type="STRING" id="340177.Cag_1467"/>
<dbReference type="KEGG" id="cch:Cag_1467"/>
<dbReference type="eggNOG" id="COG0124">
    <property type="taxonomic scope" value="Bacteria"/>
</dbReference>
<dbReference type="HOGENOM" id="CLU_025113_1_1_10"/>
<dbReference type="OrthoDB" id="9800814at2"/>
<dbReference type="GO" id="GO:0005737">
    <property type="term" value="C:cytoplasm"/>
    <property type="evidence" value="ECO:0007669"/>
    <property type="project" value="UniProtKB-SubCell"/>
</dbReference>
<dbReference type="GO" id="GO:0005524">
    <property type="term" value="F:ATP binding"/>
    <property type="evidence" value="ECO:0007669"/>
    <property type="project" value="UniProtKB-UniRule"/>
</dbReference>
<dbReference type="GO" id="GO:0004821">
    <property type="term" value="F:histidine-tRNA ligase activity"/>
    <property type="evidence" value="ECO:0007669"/>
    <property type="project" value="UniProtKB-UniRule"/>
</dbReference>
<dbReference type="GO" id="GO:0006427">
    <property type="term" value="P:histidyl-tRNA aminoacylation"/>
    <property type="evidence" value="ECO:0007669"/>
    <property type="project" value="UniProtKB-UniRule"/>
</dbReference>
<dbReference type="CDD" id="cd00773">
    <property type="entry name" value="HisRS-like_core"/>
    <property type="match status" value="1"/>
</dbReference>
<dbReference type="CDD" id="cd00859">
    <property type="entry name" value="HisRS_anticodon"/>
    <property type="match status" value="1"/>
</dbReference>
<dbReference type="Gene3D" id="3.40.50.800">
    <property type="entry name" value="Anticodon-binding domain"/>
    <property type="match status" value="1"/>
</dbReference>
<dbReference type="Gene3D" id="3.30.930.10">
    <property type="entry name" value="Bira Bifunctional Protein, Domain 2"/>
    <property type="match status" value="1"/>
</dbReference>
<dbReference type="HAMAP" id="MF_00127">
    <property type="entry name" value="His_tRNA_synth"/>
    <property type="match status" value="1"/>
</dbReference>
<dbReference type="InterPro" id="IPR006195">
    <property type="entry name" value="aa-tRNA-synth_II"/>
</dbReference>
<dbReference type="InterPro" id="IPR045864">
    <property type="entry name" value="aa-tRNA-synth_II/BPL/LPL"/>
</dbReference>
<dbReference type="InterPro" id="IPR004154">
    <property type="entry name" value="Anticodon-bd"/>
</dbReference>
<dbReference type="InterPro" id="IPR036621">
    <property type="entry name" value="Anticodon-bd_dom_sf"/>
</dbReference>
<dbReference type="InterPro" id="IPR015807">
    <property type="entry name" value="His-tRNA-ligase"/>
</dbReference>
<dbReference type="InterPro" id="IPR041715">
    <property type="entry name" value="HisRS-like_core"/>
</dbReference>
<dbReference type="InterPro" id="IPR004516">
    <property type="entry name" value="HisRS/HisZ"/>
</dbReference>
<dbReference type="InterPro" id="IPR033656">
    <property type="entry name" value="HisRS_anticodon"/>
</dbReference>
<dbReference type="NCBIfam" id="TIGR00442">
    <property type="entry name" value="hisS"/>
    <property type="match status" value="1"/>
</dbReference>
<dbReference type="PANTHER" id="PTHR43707:SF1">
    <property type="entry name" value="HISTIDINE--TRNA LIGASE, MITOCHONDRIAL-RELATED"/>
    <property type="match status" value="1"/>
</dbReference>
<dbReference type="PANTHER" id="PTHR43707">
    <property type="entry name" value="HISTIDYL-TRNA SYNTHETASE"/>
    <property type="match status" value="1"/>
</dbReference>
<dbReference type="Pfam" id="PF03129">
    <property type="entry name" value="HGTP_anticodon"/>
    <property type="match status" value="1"/>
</dbReference>
<dbReference type="Pfam" id="PF13393">
    <property type="entry name" value="tRNA-synt_His"/>
    <property type="match status" value="1"/>
</dbReference>
<dbReference type="PIRSF" id="PIRSF001549">
    <property type="entry name" value="His-tRNA_synth"/>
    <property type="match status" value="1"/>
</dbReference>
<dbReference type="SUPFAM" id="SSF52954">
    <property type="entry name" value="Class II aaRS ABD-related"/>
    <property type="match status" value="1"/>
</dbReference>
<dbReference type="SUPFAM" id="SSF55681">
    <property type="entry name" value="Class II aaRS and biotin synthetases"/>
    <property type="match status" value="1"/>
</dbReference>
<dbReference type="PROSITE" id="PS50862">
    <property type="entry name" value="AA_TRNA_LIGASE_II"/>
    <property type="match status" value="1"/>
</dbReference>
<name>SYH_CHLCH</name>
<sequence length="425" mass="47485">MSSFQCVKGTRDILPDESLLWSFVSSHFHHVASLYGFREIRTPMFEYTDLFQRGIGATTDIVGKEMFSFQPDPAGRSITLRPEMTAGVMRAALQNNLLAQAPLHKLFYIGELFRKERPQAGRQRQFNQCGAELLGVSSPAAVAEVMSLMMHFFGALGLTGLTLKVNTLGNAEERLAYREALQAYFAPHRAMLDASSQERLEKNPLRILDSKNPALQELIAAAPRLYDYLQEASLRDFEKVLFYLTERRISYTIDYRLVRGLDYYCHTAFEVTSNELGAQDAIGGGGRYDALARELGSATDIPAVGFAVGMERLLIVLEKQGLLGNRHARPPRLYVVVQQQEMLDHALQLVWRLRNGGIRSELDLAGRSMKAQMREANKLGALYALFVGASECASGKYGLKNLATSEQTDLSIEAVMQLLHDHVTE</sequence>
<comment type="catalytic activity">
    <reaction evidence="1">
        <text>tRNA(His) + L-histidine + ATP = L-histidyl-tRNA(His) + AMP + diphosphate + H(+)</text>
        <dbReference type="Rhea" id="RHEA:17313"/>
        <dbReference type="Rhea" id="RHEA-COMP:9665"/>
        <dbReference type="Rhea" id="RHEA-COMP:9689"/>
        <dbReference type="ChEBI" id="CHEBI:15378"/>
        <dbReference type="ChEBI" id="CHEBI:30616"/>
        <dbReference type="ChEBI" id="CHEBI:33019"/>
        <dbReference type="ChEBI" id="CHEBI:57595"/>
        <dbReference type="ChEBI" id="CHEBI:78442"/>
        <dbReference type="ChEBI" id="CHEBI:78527"/>
        <dbReference type="ChEBI" id="CHEBI:456215"/>
        <dbReference type="EC" id="6.1.1.21"/>
    </reaction>
</comment>
<comment type="subunit">
    <text evidence="1">Homodimer.</text>
</comment>
<comment type="subcellular location">
    <subcellularLocation>
        <location evidence="1">Cytoplasm</location>
    </subcellularLocation>
</comment>
<comment type="similarity">
    <text evidence="1">Belongs to the class-II aminoacyl-tRNA synthetase family.</text>
</comment>
<proteinExistence type="inferred from homology"/>
<accession>Q3AQK2</accession>